<name>MLPF_BORBU</name>
<reference key="1">
    <citation type="journal article" date="1997" name="Nature">
        <title>Genomic sequence of a Lyme disease spirochaete, Borrelia burgdorferi.</title>
        <authorList>
            <person name="Fraser C.M."/>
            <person name="Casjens S."/>
            <person name="Huang W.M."/>
            <person name="Sutton G.G."/>
            <person name="Clayton R.A."/>
            <person name="Lathigra R."/>
            <person name="White O."/>
            <person name="Ketchum K.A."/>
            <person name="Dodson R.J."/>
            <person name="Hickey E.K."/>
            <person name="Gwinn M.L."/>
            <person name="Dougherty B.A."/>
            <person name="Tomb J.-F."/>
            <person name="Fleischmann R.D."/>
            <person name="Richardson D.L."/>
            <person name="Peterson J.D."/>
            <person name="Kerlavage A.R."/>
            <person name="Quackenbush J."/>
            <person name="Salzberg S.L."/>
            <person name="Hanson M."/>
            <person name="van Vugt R."/>
            <person name="Palmer N."/>
            <person name="Adams M.D."/>
            <person name="Gocayne J.D."/>
            <person name="Weidman J.F."/>
            <person name="Utterback T.R."/>
            <person name="Watthey L."/>
            <person name="McDonald L.A."/>
            <person name="Artiach P."/>
            <person name="Bowman C."/>
            <person name="Garland S.A."/>
            <person name="Fujii C."/>
            <person name="Cotton M.D."/>
            <person name="Horst K."/>
            <person name="Roberts K.M."/>
            <person name="Hatch B."/>
            <person name="Smith H.O."/>
            <person name="Venter J.C."/>
        </authorList>
    </citation>
    <scope>NUCLEOTIDE SEQUENCE [LARGE SCALE GENOMIC DNA]</scope>
    <source>
        <strain>ATCC 35210 / DSM 4680 / CIP 102532 / B31</strain>
    </source>
</reference>
<reference key="2">
    <citation type="journal article" date="2000" name="Mol. Microbiol.">
        <title>A bacterial genome in flux: the twelve linear and nine circular extrachromosomal DNAs in an infectious isolate of the Lyme disease spirochete Borrelia burgdorferi.</title>
        <authorList>
            <person name="Casjens S."/>
            <person name="Palmer N."/>
            <person name="van Vugt R."/>
            <person name="Huang W.M."/>
            <person name="Stevenson B."/>
            <person name="Rosa P."/>
            <person name="Lathigra R."/>
            <person name="Sutton G.G."/>
            <person name="Peterson J.D."/>
            <person name="Dodson R.J."/>
            <person name="Haft D.H."/>
            <person name="Hickey E.K."/>
            <person name="Gwinn M.L."/>
            <person name="White O."/>
            <person name="Fraser C.M."/>
        </authorList>
    </citation>
    <scope>NUCLEOTIDE SEQUENCE [LARGE SCALE GENOMIC DNA]</scope>
    <source>
        <strain>ATCC 35210 / DSM 4680 / CIP 102532 / B31</strain>
    </source>
</reference>
<reference key="3">
    <citation type="journal article" date="2000" name="Infect. Immun.">
        <title>Expression and immunological analysis of the plasmid-borne mlp genes of Borrelia burgdorferi strain B31.</title>
        <authorList>
            <person name="Porcella S.F."/>
            <person name="Fitzpatrick C.A."/>
            <person name="Bono J.L."/>
        </authorList>
    </citation>
    <scope>FUNCTION</scope>
    <scope>ANTIGENICITY</scope>
    <scope>SUBCELLULAR LOCATION</scope>
    <scope>INDUCTION AT 35 DEGREES CELSIUS</scope>
    <source>
        <strain>B31-4A</strain>
        <plasmid>cp32-6</plasmid>
    </source>
</reference>
<comment type="function">
    <text evidence="2 5">An outer membrane protein that may participate in pathogenesis. Some human Lyme disease patients have antibodies against this protein (PubMed:10948116). The Mlp proteins probably undergo intragenic recombination, generating new alleles (Probable).</text>
</comment>
<comment type="subcellular location">
    <subcellularLocation>
        <location evidence="5">Cell outer membrane</location>
        <topology evidence="5">Lipid-anchor</topology>
    </subcellularLocation>
</comment>
<comment type="induction">
    <text evidence="2">Strongly induced when grown at 35 degrees Celsius.</text>
</comment>
<comment type="similarity">
    <text evidence="4">Belongs to the Multicopy lipoprotein (Mlp) family.</text>
</comment>
<proteinExistence type="evidence at transcript level"/>
<accession>Q9S0B7</accession>
<organism>
    <name type="scientific">Borreliella burgdorferi (strain ATCC 35210 / DSM 4680 / CIP 102532 / B31)</name>
    <name type="common">Borrelia burgdorferi</name>
    <dbReference type="NCBI Taxonomy" id="224326"/>
    <lineage>
        <taxon>Bacteria</taxon>
        <taxon>Pseudomonadati</taxon>
        <taxon>Spirochaetota</taxon>
        <taxon>Spirochaetia</taxon>
        <taxon>Spirochaetales</taxon>
        <taxon>Borreliaceae</taxon>
        <taxon>Borreliella</taxon>
    </lineage>
</organism>
<dbReference type="EMBL" id="AE001578">
    <property type="protein sequence ID" value="AAF07539.1"/>
    <property type="molecule type" value="Genomic_DNA"/>
</dbReference>
<dbReference type="RefSeq" id="NP_051319.1">
    <property type="nucleotide sequence ID" value="NC_000951.1"/>
</dbReference>
<dbReference type="RefSeq" id="WP_010883804.1">
    <property type="nucleotide sequence ID" value="NC_000951.1"/>
</dbReference>
<dbReference type="SMR" id="Q9S0B7"/>
<dbReference type="EnsemblBacteria" id="AAF07539">
    <property type="protein sequence ID" value="AAF07539"/>
    <property type="gene ID" value="BB_M28"/>
</dbReference>
<dbReference type="KEGG" id="bbu:BB_M28"/>
<dbReference type="PATRIC" id="fig|224326.49.peg.157"/>
<dbReference type="HOGENOM" id="CLU_134260_0_0_12"/>
<dbReference type="OrthoDB" id="351076at2"/>
<dbReference type="Proteomes" id="UP000001807">
    <property type="component" value="Plasmid cp32-6"/>
</dbReference>
<dbReference type="GO" id="GO:0009279">
    <property type="term" value="C:cell outer membrane"/>
    <property type="evidence" value="ECO:0007669"/>
    <property type="project" value="UniProtKB-SubCell"/>
</dbReference>
<dbReference type="InterPro" id="IPR004983">
    <property type="entry name" value="Mlp"/>
</dbReference>
<dbReference type="Pfam" id="PF03304">
    <property type="entry name" value="Mlp"/>
    <property type="match status" value="1"/>
</dbReference>
<keyword id="KW-0998">Cell outer membrane</keyword>
<keyword id="KW-0449">Lipoprotein</keyword>
<keyword id="KW-0472">Membrane</keyword>
<keyword id="KW-0564">Palmitate</keyword>
<keyword id="KW-0614">Plasmid</keyword>
<keyword id="KW-1185">Reference proteome</keyword>
<keyword id="KW-0732">Signal</keyword>
<feature type="signal peptide" evidence="4">
    <location>
        <begin position="1"/>
        <end position="17"/>
    </location>
</feature>
<feature type="chain" id="PRO_5004331819" description="Lipoprotein MlpF" evidence="4">
    <location>
        <begin position="18"/>
        <end position="149"/>
    </location>
</feature>
<feature type="region of interest" description="Disordered" evidence="1">
    <location>
        <begin position="26"/>
        <end position="58"/>
    </location>
</feature>
<feature type="compositionally biased region" description="Basic and acidic residues" evidence="1">
    <location>
        <begin position="38"/>
        <end position="58"/>
    </location>
</feature>
<feature type="lipid moiety-binding region" description="N-palmitoyl cysteine" evidence="4">
    <location>
        <position position="18"/>
    </location>
</feature>
<feature type="lipid moiety-binding region" description="S-diacylglycerol cysteine" evidence="4">
    <location>
        <position position="18"/>
    </location>
</feature>
<protein>
    <recommendedName>
        <fullName evidence="3">Lipoprotein MlpF</fullName>
    </recommendedName>
</protein>
<geneLocation type="plasmid">
    <name>cp32-6</name>
</geneLocation>
<evidence type="ECO:0000256" key="1">
    <source>
        <dbReference type="SAM" id="MobiDB-lite"/>
    </source>
</evidence>
<evidence type="ECO:0000269" key="2">
    <source>
    </source>
</evidence>
<evidence type="ECO:0000303" key="3">
    <source>
    </source>
</evidence>
<evidence type="ECO:0000305" key="4"/>
<evidence type="ECO:0000305" key="5">
    <source>
    </source>
</evidence>
<gene>
    <name evidence="3" type="primary">mlpD</name>
    <name type="ordered locus">BB_M28</name>
</gene>
<sequence length="149" mass="16723">MKIINILFCLFLLLLNSCNSNDNDTLKNNAQQTKSRGKRDLTQKEATPEKPKSKEELLREKLSEDQKTHLDWLKEALGNDGEFDKFLGYDESKIKSALNHIKSELDKCTGDNSEQQKSTFKQTVQGFFSGGNIDNFANNAVSNCNNGGS</sequence>